<keyword id="KW-0032">Aminotransferase</keyword>
<keyword id="KW-0663">Pyridoxal phosphate</keyword>
<keyword id="KW-0670">Pyruvate</keyword>
<keyword id="KW-1185">Reference proteome</keyword>
<keyword id="KW-0808">Transferase</keyword>
<accession>Q81TE0</accession>
<accession>Q6F0B9</accession>
<accession>Q6I1M1</accession>
<reference key="1">
    <citation type="journal article" date="2003" name="Nature">
        <title>The genome sequence of Bacillus anthracis Ames and comparison to closely related bacteria.</title>
        <authorList>
            <person name="Read T.D."/>
            <person name="Peterson S.N."/>
            <person name="Tourasse N.J."/>
            <person name="Baillie L.W."/>
            <person name="Paulsen I.T."/>
            <person name="Nelson K.E."/>
            <person name="Tettelin H."/>
            <person name="Fouts D.E."/>
            <person name="Eisen J.A."/>
            <person name="Gill S.R."/>
            <person name="Holtzapple E.K."/>
            <person name="Okstad O.A."/>
            <person name="Helgason E."/>
            <person name="Rilstone J."/>
            <person name="Wu M."/>
            <person name="Kolonay J.F."/>
            <person name="Beanan M.J."/>
            <person name="Dodson R.J."/>
            <person name="Brinkac L.M."/>
            <person name="Gwinn M.L."/>
            <person name="DeBoy R.T."/>
            <person name="Madpu R."/>
            <person name="Daugherty S.C."/>
            <person name="Durkin A.S."/>
            <person name="Haft D.H."/>
            <person name="Nelson W.C."/>
            <person name="Peterson J.D."/>
            <person name="Pop M."/>
            <person name="Khouri H.M."/>
            <person name="Radune D."/>
            <person name="Benton J.L."/>
            <person name="Mahamoud Y."/>
            <person name="Jiang L."/>
            <person name="Hance I.R."/>
            <person name="Weidman J.F."/>
            <person name="Berry K.J."/>
            <person name="Plaut R.D."/>
            <person name="Wolf A.M."/>
            <person name="Watkins K.L."/>
            <person name="Nierman W.C."/>
            <person name="Hazen A."/>
            <person name="Cline R.T."/>
            <person name="Redmond C."/>
            <person name="Thwaite J.E."/>
            <person name="White O."/>
            <person name="Salzberg S.L."/>
            <person name="Thomason B."/>
            <person name="Friedlander A.M."/>
            <person name="Koehler T.M."/>
            <person name="Hanna P.C."/>
            <person name="Kolstoe A.-B."/>
            <person name="Fraser C.M."/>
        </authorList>
    </citation>
    <scope>NUCLEOTIDE SEQUENCE [LARGE SCALE GENOMIC DNA]</scope>
    <source>
        <strain>Ames / isolate Porton</strain>
    </source>
</reference>
<reference key="2">
    <citation type="journal article" date="2009" name="J. Bacteriol.">
        <title>The complete genome sequence of Bacillus anthracis Ames 'Ancestor'.</title>
        <authorList>
            <person name="Ravel J."/>
            <person name="Jiang L."/>
            <person name="Stanley S.T."/>
            <person name="Wilson M.R."/>
            <person name="Decker R.S."/>
            <person name="Read T.D."/>
            <person name="Worsham P."/>
            <person name="Keim P.S."/>
            <person name="Salzberg S.L."/>
            <person name="Fraser-Liggett C.M."/>
            <person name="Rasko D.A."/>
        </authorList>
    </citation>
    <scope>NUCLEOTIDE SEQUENCE [LARGE SCALE GENOMIC DNA]</scope>
    <source>
        <strain>Ames ancestor</strain>
    </source>
</reference>
<reference key="3">
    <citation type="submission" date="2004-01" db="EMBL/GenBank/DDBJ databases">
        <title>Complete genome sequence of Bacillus anthracis Sterne.</title>
        <authorList>
            <person name="Brettin T.S."/>
            <person name="Bruce D."/>
            <person name="Challacombe J.F."/>
            <person name="Gilna P."/>
            <person name="Han C."/>
            <person name="Hill K."/>
            <person name="Hitchcock P."/>
            <person name="Jackson P."/>
            <person name="Keim P."/>
            <person name="Longmire J."/>
            <person name="Lucas S."/>
            <person name="Okinaka R."/>
            <person name="Richardson P."/>
            <person name="Rubin E."/>
            <person name="Tice H."/>
        </authorList>
    </citation>
    <scope>NUCLEOTIDE SEQUENCE [LARGE SCALE GENOMIC DNA]</scope>
    <source>
        <strain>Sterne</strain>
    </source>
</reference>
<comment type="function">
    <text evidence="1">Involved in phosphonate degradation.</text>
</comment>
<comment type="catalytic activity">
    <reaction evidence="1">
        <text>(2-aminoethyl)phosphonate + pyruvate = phosphonoacetaldehyde + L-alanine</text>
        <dbReference type="Rhea" id="RHEA:17021"/>
        <dbReference type="ChEBI" id="CHEBI:15361"/>
        <dbReference type="ChEBI" id="CHEBI:57418"/>
        <dbReference type="ChEBI" id="CHEBI:57972"/>
        <dbReference type="ChEBI" id="CHEBI:58383"/>
        <dbReference type="EC" id="2.6.1.37"/>
    </reaction>
</comment>
<comment type="cofactor">
    <cofactor evidence="1">
        <name>pyridoxal 5'-phosphate</name>
        <dbReference type="ChEBI" id="CHEBI:597326"/>
    </cofactor>
</comment>
<comment type="subunit">
    <text evidence="1">Homodimer.</text>
</comment>
<comment type="similarity">
    <text evidence="1">Belongs to the class-V pyridoxal-phosphate-dependent aminotransferase family. PhnW subfamily.</text>
</comment>
<name>PHNW_BACAN</name>
<proteinExistence type="inferred from homology"/>
<gene>
    <name evidence="1" type="primary">phnW</name>
    <name type="ordered locus">BA_1341</name>
    <name type="ordered locus">GBAA_1341</name>
    <name type="ordered locus">BAS1240</name>
</gene>
<protein>
    <recommendedName>
        <fullName evidence="1">2-aminoethylphosphonate--pyruvate transaminase</fullName>
        <ecNumber evidence="1">2.6.1.37</ecNumber>
    </recommendedName>
    <alternativeName>
        <fullName evidence="1">2-aminoethylphosphonate aminotransferase</fullName>
    </alternativeName>
    <alternativeName>
        <fullName evidence="1">AEP transaminase</fullName>
        <shortName evidence="1">AEPT</shortName>
    </alternativeName>
</protein>
<dbReference type="EC" id="2.6.1.37" evidence="1"/>
<dbReference type="EMBL" id="AE016879">
    <property type="protein sequence ID" value="AAP25290.1"/>
    <property type="molecule type" value="Genomic_DNA"/>
</dbReference>
<dbReference type="EMBL" id="AE017334">
    <property type="protein sequence ID" value="AAT70127.1"/>
    <property type="molecule type" value="Genomic_DNA"/>
</dbReference>
<dbReference type="EMBL" id="AE017225">
    <property type="protein sequence ID" value="AAT53560.1"/>
    <property type="molecule type" value="Genomic_DNA"/>
</dbReference>
<dbReference type="RefSeq" id="NP_843804.1">
    <property type="nucleotide sequence ID" value="NC_003997.3"/>
</dbReference>
<dbReference type="RefSeq" id="WP_000138251.1">
    <property type="nucleotide sequence ID" value="NZ_WXXJ01000001.1"/>
</dbReference>
<dbReference type="RefSeq" id="YP_027509.1">
    <property type="nucleotide sequence ID" value="NC_005945.1"/>
</dbReference>
<dbReference type="SMR" id="Q81TE0"/>
<dbReference type="STRING" id="261594.GBAA_1341"/>
<dbReference type="DNASU" id="1084754"/>
<dbReference type="GeneID" id="45021330"/>
<dbReference type="KEGG" id="ban:BA_1341"/>
<dbReference type="KEGG" id="bar:GBAA_1341"/>
<dbReference type="KEGG" id="bat:BAS1240"/>
<dbReference type="PATRIC" id="fig|198094.11.peg.1314"/>
<dbReference type="eggNOG" id="COG0075">
    <property type="taxonomic scope" value="Bacteria"/>
</dbReference>
<dbReference type="HOGENOM" id="CLU_027686_3_1_9"/>
<dbReference type="OMA" id="MLVPTNG"/>
<dbReference type="OrthoDB" id="389074at2"/>
<dbReference type="Proteomes" id="UP000000427">
    <property type="component" value="Chromosome"/>
</dbReference>
<dbReference type="Proteomes" id="UP000000594">
    <property type="component" value="Chromosome"/>
</dbReference>
<dbReference type="GO" id="GO:0047304">
    <property type="term" value="F:2-aminoethylphosphonate-pyruvate transaminase activity"/>
    <property type="evidence" value="ECO:0007669"/>
    <property type="project" value="UniProtKB-UniRule"/>
</dbReference>
<dbReference type="GO" id="GO:0019700">
    <property type="term" value="P:organic phosphonate catabolic process"/>
    <property type="evidence" value="ECO:0007669"/>
    <property type="project" value="InterPro"/>
</dbReference>
<dbReference type="Gene3D" id="3.90.1150.10">
    <property type="entry name" value="Aspartate Aminotransferase, domain 1"/>
    <property type="match status" value="1"/>
</dbReference>
<dbReference type="Gene3D" id="3.40.640.10">
    <property type="entry name" value="Type I PLP-dependent aspartate aminotransferase-like (Major domain)"/>
    <property type="match status" value="1"/>
</dbReference>
<dbReference type="HAMAP" id="MF_01376">
    <property type="entry name" value="PhnW_aminotrans_5"/>
    <property type="match status" value="1"/>
</dbReference>
<dbReference type="InterPro" id="IPR000192">
    <property type="entry name" value="Aminotrans_V_dom"/>
</dbReference>
<dbReference type="InterPro" id="IPR012703">
    <property type="entry name" value="NH2EtPonate_pyrv_transaminase"/>
</dbReference>
<dbReference type="InterPro" id="IPR015424">
    <property type="entry name" value="PyrdxlP-dep_Trfase"/>
</dbReference>
<dbReference type="InterPro" id="IPR015421">
    <property type="entry name" value="PyrdxlP-dep_Trfase_major"/>
</dbReference>
<dbReference type="InterPro" id="IPR015422">
    <property type="entry name" value="PyrdxlP-dep_Trfase_small"/>
</dbReference>
<dbReference type="InterPro" id="IPR024169">
    <property type="entry name" value="SP_NH2Trfase/AEP_transaminase"/>
</dbReference>
<dbReference type="NCBIfam" id="TIGR03301">
    <property type="entry name" value="PhnW-AepZ"/>
    <property type="match status" value="1"/>
</dbReference>
<dbReference type="NCBIfam" id="NF010006">
    <property type="entry name" value="PRK13479.1"/>
    <property type="match status" value="1"/>
</dbReference>
<dbReference type="NCBIfam" id="TIGR02326">
    <property type="entry name" value="transamin_PhnW"/>
    <property type="match status" value="1"/>
</dbReference>
<dbReference type="PANTHER" id="PTHR42778">
    <property type="entry name" value="2-AMINOETHYLPHOSPHONATE--PYRUVATE TRANSAMINASE"/>
    <property type="match status" value="1"/>
</dbReference>
<dbReference type="PANTHER" id="PTHR42778:SF1">
    <property type="entry name" value="2-AMINOETHYLPHOSPHONATE--PYRUVATE TRANSAMINASE"/>
    <property type="match status" value="1"/>
</dbReference>
<dbReference type="Pfam" id="PF00266">
    <property type="entry name" value="Aminotran_5"/>
    <property type="match status" value="1"/>
</dbReference>
<dbReference type="PIRSF" id="PIRSF000524">
    <property type="entry name" value="SPT"/>
    <property type="match status" value="1"/>
</dbReference>
<dbReference type="SUPFAM" id="SSF53383">
    <property type="entry name" value="PLP-dependent transferases"/>
    <property type="match status" value="1"/>
</dbReference>
<organism>
    <name type="scientific">Bacillus anthracis</name>
    <dbReference type="NCBI Taxonomy" id="1392"/>
    <lineage>
        <taxon>Bacteria</taxon>
        <taxon>Bacillati</taxon>
        <taxon>Bacillota</taxon>
        <taxon>Bacilli</taxon>
        <taxon>Bacillales</taxon>
        <taxon>Bacillaceae</taxon>
        <taxon>Bacillus</taxon>
        <taxon>Bacillus cereus group</taxon>
    </lineage>
</organism>
<evidence type="ECO:0000255" key="1">
    <source>
        <dbReference type="HAMAP-Rule" id="MF_01376"/>
    </source>
</evidence>
<feature type="chain" id="PRO_0000286752" description="2-aminoethylphosphonate--pyruvate transaminase">
    <location>
        <begin position="1"/>
        <end position="365"/>
    </location>
</feature>
<feature type="modified residue" description="N6-(pyridoxal phosphate)lysine" evidence="1">
    <location>
        <position position="194"/>
    </location>
</feature>
<sequence length="365" mass="41298">MTENHYLLLTPGPLTTTKTVKEVMLYDWCTWDVEYNTMVQKVRAKLVSLATKEEEKYTTVLMQGSGTFSVEAVIGSVIPKNGKLLVCTNGAYGKRIVQMAEMLHIDVVVSQTEEWEPTNIVEVEKILQQDKEITHIAVVHCETTTGIINPIVDVCKLGKQYGKVTLVDAMSSFGGIEIDIAELQIDFLISSANKCIQGVPGFGFVIAQRDELLKCKGQARSLSLDLYDQWETMENQNGKWRFTSPTHVVHAFYQALLELEKEGGVRARYNRYYNNQKLLVNRMGEIGFKPLVNEKYQSPIITSFIYPEGNFEFQQLYNELKRYGFVIYPGKISKVDTFRIGNIGDVHEEDINRLVDSIAKGVVIG</sequence>